<organism>
    <name type="scientific">Bordetella bronchiseptica (strain ATCC BAA-588 / NCTC 13252 / RB50)</name>
    <name type="common">Alcaligenes bronchisepticus</name>
    <dbReference type="NCBI Taxonomy" id="257310"/>
    <lineage>
        <taxon>Bacteria</taxon>
        <taxon>Pseudomonadati</taxon>
        <taxon>Pseudomonadota</taxon>
        <taxon>Betaproteobacteria</taxon>
        <taxon>Burkholderiales</taxon>
        <taxon>Alcaligenaceae</taxon>
        <taxon>Bordetella</taxon>
    </lineage>
</organism>
<name>GCST_BORBR</name>
<proteinExistence type="inferred from homology"/>
<dbReference type="EC" id="2.1.2.10" evidence="1"/>
<dbReference type="EMBL" id="BX640439">
    <property type="protein sequence ID" value="CAE31353.1"/>
    <property type="molecule type" value="Genomic_DNA"/>
</dbReference>
<dbReference type="RefSeq" id="WP_003808404.1">
    <property type="nucleotide sequence ID" value="NC_002927.3"/>
</dbReference>
<dbReference type="SMR" id="Q7WP31"/>
<dbReference type="GeneID" id="56480477"/>
<dbReference type="KEGG" id="bbr:BB0854"/>
<dbReference type="eggNOG" id="COG0404">
    <property type="taxonomic scope" value="Bacteria"/>
</dbReference>
<dbReference type="HOGENOM" id="CLU_007884_10_2_4"/>
<dbReference type="Proteomes" id="UP000001027">
    <property type="component" value="Chromosome"/>
</dbReference>
<dbReference type="GO" id="GO:0005829">
    <property type="term" value="C:cytosol"/>
    <property type="evidence" value="ECO:0007669"/>
    <property type="project" value="TreeGrafter"/>
</dbReference>
<dbReference type="GO" id="GO:0005960">
    <property type="term" value="C:glycine cleavage complex"/>
    <property type="evidence" value="ECO:0007669"/>
    <property type="project" value="InterPro"/>
</dbReference>
<dbReference type="GO" id="GO:0004047">
    <property type="term" value="F:aminomethyltransferase activity"/>
    <property type="evidence" value="ECO:0007669"/>
    <property type="project" value="UniProtKB-UniRule"/>
</dbReference>
<dbReference type="GO" id="GO:0008483">
    <property type="term" value="F:transaminase activity"/>
    <property type="evidence" value="ECO:0007669"/>
    <property type="project" value="UniProtKB-KW"/>
</dbReference>
<dbReference type="GO" id="GO:0019464">
    <property type="term" value="P:glycine decarboxylation via glycine cleavage system"/>
    <property type="evidence" value="ECO:0007669"/>
    <property type="project" value="UniProtKB-UniRule"/>
</dbReference>
<dbReference type="FunFam" id="3.30.70.1400:FF:000001">
    <property type="entry name" value="Aminomethyltransferase"/>
    <property type="match status" value="1"/>
</dbReference>
<dbReference type="Gene3D" id="2.40.30.110">
    <property type="entry name" value="Aminomethyltransferase beta-barrel domains"/>
    <property type="match status" value="1"/>
</dbReference>
<dbReference type="Gene3D" id="3.30.70.1400">
    <property type="entry name" value="Aminomethyltransferase beta-barrel domains"/>
    <property type="match status" value="1"/>
</dbReference>
<dbReference type="Gene3D" id="4.10.1250.10">
    <property type="entry name" value="Aminomethyltransferase fragment"/>
    <property type="match status" value="1"/>
</dbReference>
<dbReference type="Gene3D" id="3.30.1360.120">
    <property type="entry name" value="Probable tRNA modification gtpase trme, domain 1"/>
    <property type="match status" value="1"/>
</dbReference>
<dbReference type="HAMAP" id="MF_00259">
    <property type="entry name" value="GcvT"/>
    <property type="match status" value="1"/>
</dbReference>
<dbReference type="InterPro" id="IPR006223">
    <property type="entry name" value="GCS_T"/>
</dbReference>
<dbReference type="InterPro" id="IPR022903">
    <property type="entry name" value="GCS_T_bac"/>
</dbReference>
<dbReference type="InterPro" id="IPR013977">
    <property type="entry name" value="GCST_C"/>
</dbReference>
<dbReference type="InterPro" id="IPR006222">
    <property type="entry name" value="GCV_T_N"/>
</dbReference>
<dbReference type="InterPro" id="IPR028896">
    <property type="entry name" value="GcvT/YgfZ/DmdA"/>
</dbReference>
<dbReference type="InterPro" id="IPR029043">
    <property type="entry name" value="GcvT/YgfZ_C"/>
</dbReference>
<dbReference type="InterPro" id="IPR027266">
    <property type="entry name" value="TrmE/GcvT_dom1"/>
</dbReference>
<dbReference type="NCBIfam" id="TIGR00528">
    <property type="entry name" value="gcvT"/>
    <property type="match status" value="1"/>
</dbReference>
<dbReference type="NCBIfam" id="NF001567">
    <property type="entry name" value="PRK00389.1"/>
    <property type="match status" value="1"/>
</dbReference>
<dbReference type="PANTHER" id="PTHR43757">
    <property type="entry name" value="AMINOMETHYLTRANSFERASE"/>
    <property type="match status" value="1"/>
</dbReference>
<dbReference type="PANTHER" id="PTHR43757:SF2">
    <property type="entry name" value="AMINOMETHYLTRANSFERASE, MITOCHONDRIAL"/>
    <property type="match status" value="1"/>
</dbReference>
<dbReference type="Pfam" id="PF01571">
    <property type="entry name" value="GCV_T"/>
    <property type="match status" value="1"/>
</dbReference>
<dbReference type="Pfam" id="PF08669">
    <property type="entry name" value="GCV_T_C"/>
    <property type="match status" value="1"/>
</dbReference>
<dbReference type="PIRSF" id="PIRSF006487">
    <property type="entry name" value="GcvT"/>
    <property type="match status" value="1"/>
</dbReference>
<dbReference type="SUPFAM" id="SSF101790">
    <property type="entry name" value="Aminomethyltransferase beta-barrel domain"/>
    <property type="match status" value="1"/>
</dbReference>
<dbReference type="SUPFAM" id="SSF103025">
    <property type="entry name" value="Folate-binding domain"/>
    <property type="match status" value="1"/>
</dbReference>
<sequence>MSAPLKRTPLAEEHLAAGARMVDFGGWDMPLAYGSQLEEHHAVRQDAGMFDVSHMLNVDVGGADATAFLRRLVANDVARLATPGKALYSCMLNPQGGIIDDLIIYYFAPDQWRVVVNAGTADKDIAWMQRVAAADGFDVAIAPRRDLAMVAVQGPNARAKVWAARPAWQAASEPLAPFSAAAVEAGTLVARTGYTGEDGFEIVLPADAVVQLWRDLLAQGVRPCGLGARDTLRLEAGMNLYGQDMDELVHPDQAGLSWTVALKDEARRFVGRDAIEQFAVPRAFVGLKLQERGVMRAHMPVRCAQGMGELTSGTMSPTLGVSVGFARVPVGVQPGDAVEVEIRGKWVPALVCKLPFVRHGKAVEHS</sequence>
<accession>Q7WP31</accession>
<gene>
    <name evidence="1" type="primary">gcvT</name>
    <name type="ordered locus">BB0854</name>
</gene>
<comment type="function">
    <text evidence="1">The glycine cleavage system catalyzes the degradation of glycine.</text>
</comment>
<comment type="catalytic activity">
    <reaction evidence="1">
        <text>N(6)-[(R)-S(8)-aminomethyldihydrolipoyl]-L-lysyl-[protein] + (6S)-5,6,7,8-tetrahydrofolate = N(6)-[(R)-dihydrolipoyl]-L-lysyl-[protein] + (6R)-5,10-methylene-5,6,7,8-tetrahydrofolate + NH4(+)</text>
        <dbReference type="Rhea" id="RHEA:16945"/>
        <dbReference type="Rhea" id="RHEA-COMP:10475"/>
        <dbReference type="Rhea" id="RHEA-COMP:10492"/>
        <dbReference type="ChEBI" id="CHEBI:15636"/>
        <dbReference type="ChEBI" id="CHEBI:28938"/>
        <dbReference type="ChEBI" id="CHEBI:57453"/>
        <dbReference type="ChEBI" id="CHEBI:83100"/>
        <dbReference type="ChEBI" id="CHEBI:83143"/>
        <dbReference type="EC" id="2.1.2.10"/>
    </reaction>
</comment>
<comment type="subunit">
    <text evidence="1">The glycine cleavage system is composed of four proteins: P, T, L and H.</text>
</comment>
<comment type="similarity">
    <text evidence="1">Belongs to the GcvT family.</text>
</comment>
<reference key="1">
    <citation type="journal article" date="2003" name="Nat. Genet.">
        <title>Comparative analysis of the genome sequences of Bordetella pertussis, Bordetella parapertussis and Bordetella bronchiseptica.</title>
        <authorList>
            <person name="Parkhill J."/>
            <person name="Sebaihia M."/>
            <person name="Preston A."/>
            <person name="Murphy L.D."/>
            <person name="Thomson N.R."/>
            <person name="Harris D.E."/>
            <person name="Holden M.T.G."/>
            <person name="Churcher C.M."/>
            <person name="Bentley S.D."/>
            <person name="Mungall K.L."/>
            <person name="Cerdeno-Tarraga A.-M."/>
            <person name="Temple L."/>
            <person name="James K.D."/>
            <person name="Harris B."/>
            <person name="Quail M.A."/>
            <person name="Achtman M."/>
            <person name="Atkin R."/>
            <person name="Baker S."/>
            <person name="Basham D."/>
            <person name="Bason N."/>
            <person name="Cherevach I."/>
            <person name="Chillingworth T."/>
            <person name="Collins M."/>
            <person name="Cronin A."/>
            <person name="Davis P."/>
            <person name="Doggett J."/>
            <person name="Feltwell T."/>
            <person name="Goble A."/>
            <person name="Hamlin N."/>
            <person name="Hauser H."/>
            <person name="Holroyd S."/>
            <person name="Jagels K."/>
            <person name="Leather S."/>
            <person name="Moule S."/>
            <person name="Norberczak H."/>
            <person name="O'Neil S."/>
            <person name="Ormond D."/>
            <person name="Price C."/>
            <person name="Rabbinowitsch E."/>
            <person name="Rutter S."/>
            <person name="Sanders M."/>
            <person name="Saunders D."/>
            <person name="Seeger K."/>
            <person name="Sharp S."/>
            <person name="Simmonds M."/>
            <person name="Skelton J."/>
            <person name="Squares R."/>
            <person name="Squares S."/>
            <person name="Stevens K."/>
            <person name="Unwin L."/>
            <person name="Whitehead S."/>
            <person name="Barrell B.G."/>
            <person name="Maskell D.J."/>
        </authorList>
    </citation>
    <scope>NUCLEOTIDE SEQUENCE [LARGE SCALE GENOMIC DNA]</scope>
    <source>
        <strain>ATCC BAA-588 / NCTC 13252 / RB50</strain>
    </source>
</reference>
<evidence type="ECO:0000255" key="1">
    <source>
        <dbReference type="HAMAP-Rule" id="MF_00259"/>
    </source>
</evidence>
<protein>
    <recommendedName>
        <fullName evidence="1">Aminomethyltransferase</fullName>
        <ecNumber evidence="1">2.1.2.10</ecNumber>
    </recommendedName>
    <alternativeName>
        <fullName evidence="1">Glycine cleavage system T protein</fullName>
    </alternativeName>
</protein>
<feature type="chain" id="PRO_0000122546" description="Aminomethyltransferase">
    <location>
        <begin position="1"/>
        <end position="366"/>
    </location>
</feature>
<keyword id="KW-0032">Aminotransferase</keyword>
<keyword id="KW-0808">Transferase</keyword>